<dbReference type="EC" id="3.6.4.-" evidence="6"/>
<dbReference type="EMBL" id="M10607">
    <property type="protein sequence ID" value="AAA98527.1"/>
    <property type="molecule type" value="Genomic_DNA"/>
</dbReference>
<dbReference type="EMBL" id="X02212">
    <property type="protein sequence ID" value="CAA26135.1"/>
    <property type="molecule type" value="Genomic_DNA"/>
</dbReference>
<dbReference type="PIR" id="A23022">
    <property type="entry name" value="A23022"/>
</dbReference>
<dbReference type="PIR" id="A43616">
    <property type="entry name" value="A43616"/>
</dbReference>
<dbReference type="RefSeq" id="NP_001072949.1">
    <property type="nucleotide sequence ID" value="NM_001079481.2"/>
</dbReference>
<dbReference type="SMR" id="P68034"/>
<dbReference type="FunCoup" id="P68034">
    <property type="interactions" value="794"/>
</dbReference>
<dbReference type="STRING" id="9031.ENSGALP00000062307"/>
<dbReference type="PaxDb" id="9031-ENSGALP00000015988"/>
<dbReference type="GeneID" id="423298"/>
<dbReference type="KEGG" id="gga:423298"/>
<dbReference type="CTD" id="70"/>
<dbReference type="VEuPathDB" id="HostDB:geneid_423298"/>
<dbReference type="eggNOG" id="KOG0676">
    <property type="taxonomic scope" value="Eukaryota"/>
</dbReference>
<dbReference type="HOGENOM" id="CLU_027965_0_2_1"/>
<dbReference type="InParanoid" id="P68034"/>
<dbReference type="OMA" id="FTTSAEF"/>
<dbReference type="OrthoDB" id="9092295at2759"/>
<dbReference type="PhylomeDB" id="P68034"/>
<dbReference type="TreeFam" id="TF354237"/>
<dbReference type="Reactome" id="R-GGA-390522">
    <property type="pathway name" value="Striated Muscle Contraction"/>
</dbReference>
<dbReference type="Reactome" id="R-GGA-8980692">
    <property type="pathway name" value="RHOA GTPase cycle"/>
</dbReference>
<dbReference type="Reactome" id="R-GGA-9013026">
    <property type="pathway name" value="RHOB GTPase cycle"/>
</dbReference>
<dbReference type="PRO" id="PR:P68034"/>
<dbReference type="Proteomes" id="UP000000539">
    <property type="component" value="Chromosome 5"/>
</dbReference>
<dbReference type="Bgee" id="ENSGALG00000009844">
    <property type="expression patterns" value="Expressed in heart and 9 other cell types or tissues"/>
</dbReference>
<dbReference type="GO" id="GO:0015629">
    <property type="term" value="C:actin cytoskeleton"/>
    <property type="evidence" value="ECO:0000318"/>
    <property type="project" value="GO_Central"/>
</dbReference>
<dbReference type="GO" id="GO:0005884">
    <property type="term" value="C:actin filament"/>
    <property type="evidence" value="ECO:0000318"/>
    <property type="project" value="GO_Central"/>
</dbReference>
<dbReference type="GO" id="GO:0030017">
    <property type="term" value="C:sarcomere"/>
    <property type="evidence" value="ECO:0000318"/>
    <property type="project" value="GO_Central"/>
</dbReference>
<dbReference type="GO" id="GO:0005524">
    <property type="term" value="F:ATP binding"/>
    <property type="evidence" value="ECO:0007669"/>
    <property type="project" value="UniProtKB-KW"/>
</dbReference>
<dbReference type="GO" id="GO:0016787">
    <property type="term" value="F:hydrolase activity"/>
    <property type="evidence" value="ECO:0007669"/>
    <property type="project" value="UniProtKB-KW"/>
</dbReference>
<dbReference type="GO" id="GO:0017022">
    <property type="term" value="F:myosin binding"/>
    <property type="evidence" value="ECO:0000318"/>
    <property type="project" value="GO_Central"/>
</dbReference>
<dbReference type="GO" id="GO:0007015">
    <property type="term" value="P:actin filament organization"/>
    <property type="evidence" value="ECO:0000318"/>
    <property type="project" value="GO_Central"/>
</dbReference>
<dbReference type="GO" id="GO:0033275">
    <property type="term" value="P:actin-myosin filament sliding"/>
    <property type="evidence" value="ECO:0000318"/>
    <property type="project" value="GO_Central"/>
</dbReference>
<dbReference type="GO" id="GO:0060047">
    <property type="term" value="P:heart contraction"/>
    <property type="evidence" value="ECO:0000318"/>
    <property type="project" value="GO_Central"/>
</dbReference>
<dbReference type="CDD" id="cd10224">
    <property type="entry name" value="ASKHA_NBD_actin"/>
    <property type="match status" value="1"/>
</dbReference>
<dbReference type="FunFam" id="3.30.420.40:FF:000131">
    <property type="entry name" value="Actin, alpha skeletal muscle"/>
    <property type="match status" value="1"/>
</dbReference>
<dbReference type="FunFam" id="3.30.420.40:FF:000291">
    <property type="entry name" value="Actin, alpha skeletal muscle"/>
    <property type="match status" value="1"/>
</dbReference>
<dbReference type="FunFam" id="3.90.640.10:FF:000047">
    <property type="entry name" value="Actin, alpha skeletal muscle"/>
    <property type="match status" value="1"/>
</dbReference>
<dbReference type="FunFam" id="3.30.420.40:FF:000058">
    <property type="entry name" value="Putative actin-related protein 5"/>
    <property type="match status" value="1"/>
</dbReference>
<dbReference type="Gene3D" id="3.30.420.40">
    <property type="match status" value="2"/>
</dbReference>
<dbReference type="Gene3D" id="3.90.640.10">
    <property type="entry name" value="Actin, Chain A, domain 4"/>
    <property type="match status" value="1"/>
</dbReference>
<dbReference type="InterPro" id="IPR004000">
    <property type="entry name" value="Actin"/>
</dbReference>
<dbReference type="InterPro" id="IPR020902">
    <property type="entry name" value="Actin/actin-like_CS"/>
</dbReference>
<dbReference type="InterPro" id="IPR004001">
    <property type="entry name" value="Actin_CS"/>
</dbReference>
<dbReference type="InterPro" id="IPR043129">
    <property type="entry name" value="ATPase_NBD"/>
</dbReference>
<dbReference type="PANTHER" id="PTHR11937">
    <property type="entry name" value="ACTIN"/>
    <property type="match status" value="1"/>
</dbReference>
<dbReference type="Pfam" id="PF00022">
    <property type="entry name" value="Actin"/>
    <property type="match status" value="1"/>
</dbReference>
<dbReference type="PRINTS" id="PR00190">
    <property type="entry name" value="ACTIN"/>
</dbReference>
<dbReference type="SMART" id="SM00268">
    <property type="entry name" value="ACTIN"/>
    <property type="match status" value="1"/>
</dbReference>
<dbReference type="SUPFAM" id="SSF53067">
    <property type="entry name" value="Actin-like ATPase domain"/>
    <property type="match status" value="2"/>
</dbReference>
<dbReference type="PROSITE" id="PS00406">
    <property type="entry name" value="ACTINS_1"/>
    <property type="match status" value="1"/>
</dbReference>
<dbReference type="PROSITE" id="PS00432">
    <property type="entry name" value="ACTINS_2"/>
    <property type="match status" value="1"/>
</dbReference>
<dbReference type="PROSITE" id="PS01132">
    <property type="entry name" value="ACTINS_ACT_LIKE"/>
    <property type="match status" value="1"/>
</dbReference>
<protein>
    <recommendedName>
        <fullName>Actin, alpha cardiac muscle 1</fullName>
        <ecNumber evidence="6">3.6.4.-</ecNumber>
    </recommendedName>
    <alternativeName>
        <fullName>Alpha-cardiac actin</fullName>
    </alternativeName>
    <component>
        <recommendedName>
            <fullName>Actin, alpha cardiac muscle 1, intermediate form</fullName>
        </recommendedName>
    </component>
</protein>
<feature type="initiator methionine" description="Removed">
    <location>
        <position position="1"/>
    </location>
</feature>
<feature type="chain" id="PRO_0000443001" description="Actin, alpha cardiac muscle 1, intermediate form" evidence="1">
    <location>
        <begin position="2"/>
        <end position="377"/>
    </location>
</feature>
<feature type="chain" id="PRO_0000000819" description="Actin, alpha cardiac muscle 1" evidence="5">
    <location>
        <begin position="3"/>
        <end position="377"/>
    </location>
</feature>
<feature type="modified residue" description="N-acetylcysteine; in intermediate form" evidence="1">
    <location>
        <position position="2"/>
    </location>
</feature>
<feature type="modified residue" description="N-acetylaspartate; in Actin, alpha cardiac muscle 1" evidence="5">
    <location>
        <position position="3"/>
    </location>
</feature>
<feature type="modified residue" description="Methionine (R)-sulfoxide" evidence="4">
    <location>
        <position position="46"/>
    </location>
</feature>
<feature type="modified residue" description="Methionine (R)-sulfoxide" evidence="4">
    <location>
        <position position="49"/>
    </location>
</feature>
<feature type="modified residue" description="Tele-methylhistidine" evidence="2">
    <location>
        <position position="75"/>
    </location>
</feature>
<feature type="modified residue" description="N6-methyllysine" evidence="3">
    <location>
        <position position="86"/>
    </location>
</feature>
<name>ACTC_CHICK</name>
<keyword id="KW-0007">Acetylation</keyword>
<keyword id="KW-0067">ATP-binding</keyword>
<keyword id="KW-0963">Cytoplasm</keyword>
<keyword id="KW-0206">Cytoskeleton</keyword>
<keyword id="KW-0378">Hydrolase</keyword>
<keyword id="KW-0488">Methylation</keyword>
<keyword id="KW-0514">Muscle protein</keyword>
<keyword id="KW-0547">Nucleotide-binding</keyword>
<keyword id="KW-0558">Oxidation</keyword>
<keyword id="KW-1185">Reference proteome</keyword>
<sequence length="377" mass="42019">MCDDEETTALVCDNGSGLVKAGFAGDDAPRAVFPSIVGRPRHQGVMVGMGQKDSYVGDEAQSKRGILTLKYPIEHGIITNWDDMEKIWHHTFYNELRVAPEEHPTLLTEAPLNPKANREKMTQIMFETFNVPAMYVAIQAVLSLYASGRTTGIVLDSGDGVTHNVPIYEGYALPHAIMRLDLAGRDLTDYLMKILTERGYSFVTTAEREIVRDIKEKLCYVALDFENEMATAASSSSLEKSYELPDGQVITIGNERFRCPETLFQPSFIGMESAGIHETTYNSIMKCDIDIRKDLYANNVLSGGTTMYPGIADRMQKEITALAPSTMKIKIIAPPERKYSVWIGGSILASLSTFQQMWISKQEYDEAGPSIVHRKCF</sequence>
<reference key="1">
    <citation type="journal article" date="1985" name="Nucleic Acids Res.">
        <title>The complete sequence of the chicken alpha-cardiac actin gene: a highly conserved vertebrate gene.</title>
        <authorList>
            <person name="Chang K.S."/>
            <person name="Rothblum K.N."/>
            <person name="Schwartz R.J."/>
        </authorList>
    </citation>
    <scope>NUCLEOTIDE SEQUENCE [GENOMIC DNA]</scope>
</reference>
<reference key="2">
    <citation type="journal article" date="1985" name="Gene">
        <title>Nucleotide sequence of the chicken cardiac alpha actin gene: absence of strong homologies in the promoter and 3'-untranslated regions with the skeletal alpha actin sequence.</title>
        <authorList>
            <person name="Eldridge J."/>
            <person name="Zehner Z.E."/>
            <person name="Paterson B.M."/>
        </authorList>
    </citation>
    <scope>NUCLEOTIDE SEQUENCE [GENOMIC DNA]</scope>
    <source>
        <tissue>Heart</tissue>
    </source>
</reference>
<organism>
    <name type="scientific">Gallus gallus</name>
    <name type="common">Chicken</name>
    <dbReference type="NCBI Taxonomy" id="9031"/>
    <lineage>
        <taxon>Eukaryota</taxon>
        <taxon>Metazoa</taxon>
        <taxon>Chordata</taxon>
        <taxon>Craniata</taxon>
        <taxon>Vertebrata</taxon>
        <taxon>Euteleostomi</taxon>
        <taxon>Archelosauria</taxon>
        <taxon>Archosauria</taxon>
        <taxon>Dinosauria</taxon>
        <taxon>Saurischia</taxon>
        <taxon>Theropoda</taxon>
        <taxon>Coelurosauria</taxon>
        <taxon>Aves</taxon>
        <taxon>Neognathae</taxon>
        <taxon>Galloanserae</taxon>
        <taxon>Galliformes</taxon>
        <taxon>Phasianidae</taxon>
        <taxon>Phasianinae</taxon>
        <taxon>Gallus</taxon>
    </lineage>
</organism>
<proteinExistence type="inferred from homology"/>
<accession>P68034</accession>
<accession>P04270</accession>
<gene>
    <name type="primary">ACTC1</name>
    <name type="synonym">ACTC</name>
</gene>
<evidence type="ECO:0000250" key="1">
    <source>
        <dbReference type="UniProtKB" id="P62737"/>
    </source>
</evidence>
<evidence type="ECO:0000250" key="2">
    <source>
        <dbReference type="UniProtKB" id="P62739"/>
    </source>
</evidence>
<evidence type="ECO:0000250" key="3">
    <source>
        <dbReference type="UniProtKB" id="P68032"/>
    </source>
</evidence>
<evidence type="ECO:0000250" key="4">
    <source>
        <dbReference type="UniProtKB" id="P68033"/>
    </source>
</evidence>
<evidence type="ECO:0000250" key="5">
    <source>
        <dbReference type="UniProtKB" id="P68135"/>
    </source>
</evidence>
<evidence type="ECO:0000250" key="6">
    <source>
        <dbReference type="UniProtKB" id="P68137"/>
    </source>
</evidence>
<evidence type="ECO:0000305" key="7"/>
<comment type="function">
    <text>Actins are highly conserved proteins that are involved in various types of cell motility and are ubiquitously expressed in all eukaryotic cells.</text>
</comment>
<comment type="catalytic activity">
    <reaction evidence="6">
        <text>ATP + H2O = ADP + phosphate + H(+)</text>
        <dbReference type="Rhea" id="RHEA:13065"/>
        <dbReference type="ChEBI" id="CHEBI:15377"/>
        <dbReference type="ChEBI" id="CHEBI:15378"/>
        <dbReference type="ChEBI" id="CHEBI:30616"/>
        <dbReference type="ChEBI" id="CHEBI:43474"/>
        <dbReference type="ChEBI" id="CHEBI:456216"/>
    </reaction>
</comment>
<comment type="subunit">
    <text>Polymerization of globular actin (G-actin) leads to a structural filament (F-actin) in the form of a two-stranded helix. Each actin can bind to 4 others.</text>
</comment>
<comment type="subcellular location">
    <subcellularLocation>
        <location>Cytoplasm</location>
        <location>Cytoskeleton</location>
    </subcellularLocation>
</comment>
<comment type="PTM">
    <molecule>Actin, alpha cardiac muscle 1, intermediate form</molecule>
    <text evidence="4">N-terminal cleavage of acetylated cysteine of intermediate muscle actin by ACTMAP.</text>
</comment>
<comment type="PTM">
    <text evidence="4">Oxidation of Met-46 and Met-49 by MICALs (MICAL1, MICAL2 or MICAL3) to form methionine sulfoxide promotes actin filament depolymerization. MICAL1 and MICAL2 produce the (R)-S-oxide form. The (R)-S-oxide form is reverted by MSRB1 and MSRB2, which promotes actin repolymerization.</text>
</comment>
<comment type="PTM">
    <text evidence="3">Monomethylation at Lys-86 (K86me1) regulates actin-myosin interaction and actomyosin-dependent processes. Demethylation by ALKBH4 is required for maintaining actomyosin dynamics supporting normal cleavage furrow ingression during cytokinesis and cell migration.</text>
</comment>
<comment type="PTM">
    <text evidence="3">Methylated at His-75 by SETD3.</text>
</comment>
<comment type="miscellaneous">
    <text>In vertebrates 3 main groups of actin isoforms, alpha, beta and gamma have been identified. The alpha actins are found in muscle tissues and are a major constituent of the contractile apparatus. The beta and gamma actins coexist in most cell types as components of the cytoskeleton and as mediators of internal cell motility.</text>
</comment>
<comment type="similarity">
    <text evidence="7">Belongs to the actin family.</text>
</comment>